<accession>Q8UFT1</accession>
<evidence type="ECO:0000255" key="1">
    <source>
        <dbReference type="HAMAP-Rule" id="MF_00651"/>
    </source>
</evidence>
<proteinExistence type="inferred from homology"/>
<keyword id="KW-0963">Cytoplasm</keyword>
<keyword id="KW-0378">Hydrolase</keyword>
<keyword id="KW-0540">Nuclease</keyword>
<keyword id="KW-1185">Reference proteome</keyword>
<keyword id="KW-0690">Ribosome biogenesis</keyword>
<reference key="1">
    <citation type="journal article" date="2001" name="Science">
        <title>The genome of the natural genetic engineer Agrobacterium tumefaciens C58.</title>
        <authorList>
            <person name="Wood D.W."/>
            <person name="Setubal J.C."/>
            <person name="Kaul R."/>
            <person name="Monks D.E."/>
            <person name="Kitajima J.P."/>
            <person name="Okura V.K."/>
            <person name="Zhou Y."/>
            <person name="Chen L."/>
            <person name="Wood G.E."/>
            <person name="Almeida N.F. Jr."/>
            <person name="Woo L."/>
            <person name="Chen Y."/>
            <person name="Paulsen I.T."/>
            <person name="Eisen J.A."/>
            <person name="Karp P.D."/>
            <person name="Bovee D. Sr."/>
            <person name="Chapman P."/>
            <person name="Clendenning J."/>
            <person name="Deatherage G."/>
            <person name="Gillet W."/>
            <person name="Grant C."/>
            <person name="Kutyavin T."/>
            <person name="Levy R."/>
            <person name="Li M.-J."/>
            <person name="McClelland E."/>
            <person name="Palmieri A."/>
            <person name="Raymond C."/>
            <person name="Rouse G."/>
            <person name="Saenphimmachak C."/>
            <person name="Wu Z."/>
            <person name="Romero P."/>
            <person name="Gordon D."/>
            <person name="Zhang S."/>
            <person name="Yoo H."/>
            <person name="Tao Y."/>
            <person name="Biddle P."/>
            <person name="Jung M."/>
            <person name="Krespan W."/>
            <person name="Perry M."/>
            <person name="Gordon-Kamm B."/>
            <person name="Liao L."/>
            <person name="Kim S."/>
            <person name="Hendrick C."/>
            <person name="Zhao Z.-Y."/>
            <person name="Dolan M."/>
            <person name="Chumley F."/>
            <person name="Tingey S.V."/>
            <person name="Tomb J.-F."/>
            <person name="Gordon M.P."/>
            <person name="Olson M.V."/>
            <person name="Nester E.W."/>
        </authorList>
    </citation>
    <scope>NUCLEOTIDE SEQUENCE [LARGE SCALE GENOMIC DNA]</scope>
    <source>
        <strain>C58 / ATCC 33970</strain>
    </source>
</reference>
<reference key="2">
    <citation type="journal article" date="2001" name="Science">
        <title>Genome sequence of the plant pathogen and biotechnology agent Agrobacterium tumefaciens C58.</title>
        <authorList>
            <person name="Goodner B."/>
            <person name="Hinkle G."/>
            <person name="Gattung S."/>
            <person name="Miller N."/>
            <person name="Blanchard M."/>
            <person name="Qurollo B."/>
            <person name="Goldman B.S."/>
            <person name="Cao Y."/>
            <person name="Askenazi M."/>
            <person name="Halling C."/>
            <person name="Mullin L."/>
            <person name="Houmiel K."/>
            <person name="Gordon J."/>
            <person name="Vaudin M."/>
            <person name="Iartchouk O."/>
            <person name="Epp A."/>
            <person name="Liu F."/>
            <person name="Wollam C."/>
            <person name="Allinger M."/>
            <person name="Doughty D."/>
            <person name="Scott C."/>
            <person name="Lappas C."/>
            <person name="Markelz B."/>
            <person name="Flanagan C."/>
            <person name="Crowell C."/>
            <person name="Gurson J."/>
            <person name="Lomo C."/>
            <person name="Sear C."/>
            <person name="Strub G."/>
            <person name="Cielo C."/>
            <person name="Slater S."/>
        </authorList>
    </citation>
    <scope>NUCLEOTIDE SEQUENCE [LARGE SCALE GENOMIC DNA]</scope>
    <source>
        <strain>C58 / ATCC 33970</strain>
    </source>
</reference>
<gene>
    <name type="ordered locus">Atu1316</name>
    <name type="ORF">AGR_C_2423</name>
</gene>
<feature type="chain" id="PRO_0000172009" description="Putative pre-16S rRNA nuclease">
    <location>
        <begin position="1"/>
        <end position="159"/>
    </location>
</feature>
<protein>
    <recommendedName>
        <fullName evidence="1">Putative pre-16S rRNA nuclease</fullName>
        <ecNumber evidence="1">3.1.-.-</ecNumber>
    </recommendedName>
</protein>
<comment type="function">
    <text evidence="1">Could be a nuclease involved in processing of the 5'-end of pre-16S rRNA.</text>
</comment>
<comment type="subcellular location">
    <subcellularLocation>
        <location evidence="1">Cytoplasm</location>
    </subcellularLocation>
</comment>
<comment type="similarity">
    <text evidence="1">Belongs to the YqgF nuclease family.</text>
</comment>
<dbReference type="EC" id="3.1.-.-" evidence="1"/>
<dbReference type="EMBL" id="AE007869">
    <property type="protein sequence ID" value="AAK87107.1"/>
    <property type="molecule type" value="Genomic_DNA"/>
</dbReference>
<dbReference type="PIR" id="AD2738">
    <property type="entry name" value="AD2738"/>
</dbReference>
<dbReference type="PIR" id="B97519">
    <property type="entry name" value="B97519"/>
</dbReference>
<dbReference type="RefSeq" id="NP_354322.1">
    <property type="nucleotide sequence ID" value="NC_003062.2"/>
</dbReference>
<dbReference type="RefSeq" id="WP_010971538.1">
    <property type="nucleotide sequence ID" value="NC_003062.2"/>
</dbReference>
<dbReference type="SMR" id="Q8UFT1"/>
<dbReference type="STRING" id="176299.Atu1316"/>
<dbReference type="EnsemblBacteria" id="AAK87107">
    <property type="protein sequence ID" value="AAK87107"/>
    <property type="gene ID" value="Atu1316"/>
</dbReference>
<dbReference type="GeneID" id="1133354"/>
<dbReference type="KEGG" id="atu:Atu1316"/>
<dbReference type="PATRIC" id="fig|176299.10.peg.1332"/>
<dbReference type="eggNOG" id="COG0816">
    <property type="taxonomic scope" value="Bacteria"/>
</dbReference>
<dbReference type="HOGENOM" id="CLU_098240_1_1_5"/>
<dbReference type="OrthoDB" id="9796140at2"/>
<dbReference type="PhylomeDB" id="Q8UFT1"/>
<dbReference type="BioCyc" id="AGRO:ATU1316-MONOMER"/>
<dbReference type="Proteomes" id="UP000000813">
    <property type="component" value="Chromosome circular"/>
</dbReference>
<dbReference type="GO" id="GO:0005829">
    <property type="term" value="C:cytosol"/>
    <property type="evidence" value="ECO:0007669"/>
    <property type="project" value="TreeGrafter"/>
</dbReference>
<dbReference type="GO" id="GO:0004518">
    <property type="term" value="F:nuclease activity"/>
    <property type="evidence" value="ECO:0007669"/>
    <property type="project" value="UniProtKB-KW"/>
</dbReference>
<dbReference type="GO" id="GO:0000967">
    <property type="term" value="P:rRNA 5'-end processing"/>
    <property type="evidence" value="ECO:0007669"/>
    <property type="project" value="UniProtKB-UniRule"/>
</dbReference>
<dbReference type="CDD" id="cd16964">
    <property type="entry name" value="YqgF"/>
    <property type="match status" value="1"/>
</dbReference>
<dbReference type="Gene3D" id="3.30.420.140">
    <property type="entry name" value="YqgF/RNase H-like domain"/>
    <property type="match status" value="1"/>
</dbReference>
<dbReference type="HAMAP" id="MF_00651">
    <property type="entry name" value="Nuclease_YqgF"/>
    <property type="match status" value="1"/>
</dbReference>
<dbReference type="InterPro" id="IPR012337">
    <property type="entry name" value="RNaseH-like_sf"/>
</dbReference>
<dbReference type="InterPro" id="IPR005227">
    <property type="entry name" value="YqgF"/>
</dbReference>
<dbReference type="InterPro" id="IPR006641">
    <property type="entry name" value="YqgF/RNaseH-like_dom"/>
</dbReference>
<dbReference type="InterPro" id="IPR037027">
    <property type="entry name" value="YqgF/RNaseH-like_dom_sf"/>
</dbReference>
<dbReference type="NCBIfam" id="TIGR00250">
    <property type="entry name" value="RNAse_H_YqgF"/>
    <property type="match status" value="1"/>
</dbReference>
<dbReference type="PANTHER" id="PTHR33317">
    <property type="entry name" value="POLYNUCLEOTIDYL TRANSFERASE, RIBONUCLEASE H-LIKE SUPERFAMILY PROTEIN"/>
    <property type="match status" value="1"/>
</dbReference>
<dbReference type="PANTHER" id="PTHR33317:SF4">
    <property type="entry name" value="POLYNUCLEOTIDYL TRANSFERASE, RIBONUCLEASE H-LIKE SUPERFAMILY PROTEIN"/>
    <property type="match status" value="1"/>
</dbReference>
<dbReference type="Pfam" id="PF03652">
    <property type="entry name" value="RuvX"/>
    <property type="match status" value="1"/>
</dbReference>
<dbReference type="SMART" id="SM00732">
    <property type="entry name" value="YqgFc"/>
    <property type="match status" value="1"/>
</dbReference>
<dbReference type="SUPFAM" id="SSF53098">
    <property type="entry name" value="Ribonuclease H-like"/>
    <property type="match status" value="1"/>
</dbReference>
<name>YQGF_AGRFC</name>
<organism>
    <name type="scientific">Agrobacterium fabrum (strain C58 / ATCC 33970)</name>
    <name type="common">Agrobacterium tumefaciens (strain C58)</name>
    <dbReference type="NCBI Taxonomy" id="176299"/>
    <lineage>
        <taxon>Bacteria</taxon>
        <taxon>Pseudomonadati</taxon>
        <taxon>Pseudomonadota</taxon>
        <taxon>Alphaproteobacteria</taxon>
        <taxon>Hyphomicrobiales</taxon>
        <taxon>Rhizobiaceae</taxon>
        <taxon>Rhizobium/Agrobacterium group</taxon>
        <taxon>Agrobacterium</taxon>
        <taxon>Agrobacterium tumefaciens complex</taxon>
    </lineage>
</organism>
<sequence length="159" mass="17205">MATLTIEELAQTLQPAQAIAGLDLGTKTIGLAMSDLSRRFATPRPVIKRVKFTQDAQVLLAFAEKEKVAAFVIGLPINMDGSAGPRAQATRAFVRTMGEKTALPFIYWDERLSTVAAERALLEMDVSRAKRAERIDSAAASFILQGALDRLSALTRAAD</sequence>